<reference key="1">
    <citation type="journal article" date="2008" name="Antimicrob. Agents Chemother.">
        <title>Mutated response regulator graR is responsible for phenotypic conversion of Staphylococcus aureus from heterogeneous vancomycin-intermediate resistance to vancomycin-intermediate resistance.</title>
        <authorList>
            <person name="Neoh H.-M."/>
            <person name="Cui L."/>
            <person name="Yuzawa H."/>
            <person name="Takeuchi F."/>
            <person name="Matsuo M."/>
            <person name="Hiramatsu K."/>
        </authorList>
    </citation>
    <scope>NUCLEOTIDE SEQUENCE [LARGE SCALE GENOMIC DNA]</scope>
    <source>
        <strain>Mu3 / ATCC 700698</strain>
    </source>
</reference>
<name>RIMP_STAA1</name>
<evidence type="ECO:0000255" key="1">
    <source>
        <dbReference type="HAMAP-Rule" id="MF_01077"/>
    </source>
</evidence>
<protein>
    <recommendedName>
        <fullName evidence="1">Ribosome maturation factor RimP</fullName>
    </recommendedName>
</protein>
<comment type="function">
    <text evidence="1">Required for maturation of 30S ribosomal subunits.</text>
</comment>
<comment type="subcellular location">
    <subcellularLocation>
        <location evidence="1">Cytoplasm</location>
    </subcellularLocation>
</comment>
<comment type="similarity">
    <text evidence="1">Belongs to the RimP family.</text>
</comment>
<dbReference type="EMBL" id="AP009324">
    <property type="protein sequence ID" value="BAF78138.1"/>
    <property type="molecule type" value="Genomic_DNA"/>
</dbReference>
<dbReference type="RefSeq" id="WP_000036633.1">
    <property type="nucleotide sequence ID" value="NC_009782.1"/>
</dbReference>
<dbReference type="SMR" id="A7X1P6"/>
<dbReference type="KEGG" id="saw:SAHV_1255"/>
<dbReference type="HOGENOM" id="CLU_070525_2_0_9"/>
<dbReference type="GO" id="GO:0005829">
    <property type="term" value="C:cytosol"/>
    <property type="evidence" value="ECO:0007669"/>
    <property type="project" value="TreeGrafter"/>
</dbReference>
<dbReference type="GO" id="GO:0000028">
    <property type="term" value="P:ribosomal small subunit assembly"/>
    <property type="evidence" value="ECO:0007669"/>
    <property type="project" value="TreeGrafter"/>
</dbReference>
<dbReference type="GO" id="GO:0006412">
    <property type="term" value="P:translation"/>
    <property type="evidence" value="ECO:0007669"/>
    <property type="project" value="TreeGrafter"/>
</dbReference>
<dbReference type="CDD" id="cd01734">
    <property type="entry name" value="YlxS_C"/>
    <property type="match status" value="1"/>
</dbReference>
<dbReference type="FunFam" id="3.30.300.70:FF:000001">
    <property type="entry name" value="Ribosome maturation factor RimP"/>
    <property type="match status" value="1"/>
</dbReference>
<dbReference type="Gene3D" id="2.30.30.180">
    <property type="entry name" value="Ribosome maturation factor RimP, C-terminal domain"/>
    <property type="match status" value="1"/>
</dbReference>
<dbReference type="Gene3D" id="3.30.300.70">
    <property type="entry name" value="RimP-like superfamily, N-terminal"/>
    <property type="match status" value="1"/>
</dbReference>
<dbReference type="HAMAP" id="MF_01077">
    <property type="entry name" value="RimP"/>
    <property type="match status" value="1"/>
</dbReference>
<dbReference type="InterPro" id="IPR003728">
    <property type="entry name" value="Ribosome_maturation_RimP"/>
</dbReference>
<dbReference type="InterPro" id="IPR028998">
    <property type="entry name" value="RimP_C"/>
</dbReference>
<dbReference type="InterPro" id="IPR036847">
    <property type="entry name" value="RimP_C_sf"/>
</dbReference>
<dbReference type="InterPro" id="IPR028989">
    <property type="entry name" value="RimP_N"/>
</dbReference>
<dbReference type="InterPro" id="IPR035956">
    <property type="entry name" value="RimP_N_sf"/>
</dbReference>
<dbReference type="NCBIfam" id="NF000928">
    <property type="entry name" value="PRK00092.1-2"/>
    <property type="match status" value="1"/>
</dbReference>
<dbReference type="PANTHER" id="PTHR33867">
    <property type="entry name" value="RIBOSOME MATURATION FACTOR RIMP"/>
    <property type="match status" value="1"/>
</dbReference>
<dbReference type="PANTHER" id="PTHR33867:SF1">
    <property type="entry name" value="RIBOSOME MATURATION FACTOR RIMP"/>
    <property type="match status" value="1"/>
</dbReference>
<dbReference type="Pfam" id="PF17384">
    <property type="entry name" value="DUF150_C"/>
    <property type="match status" value="1"/>
</dbReference>
<dbReference type="Pfam" id="PF02576">
    <property type="entry name" value="RimP_N"/>
    <property type="match status" value="1"/>
</dbReference>
<dbReference type="SUPFAM" id="SSF74942">
    <property type="entry name" value="YhbC-like, C-terminal domain"/>
    <property type="match status" value="1"/>
</dbReference>
<dbReference type="SUPFAM" id="SSF75420">
    <property type="entry name" value="YhbC-like, N-terminal domain"/>
    <property type="match status" value="1"/>
</dbReference>
<keyword id="KW-0963">Cytoplasm</keyword>
<keyword id="KW-0690">Ribosome biogenesis</keyword>
<sequence length="155" mass="17627">MSKITEQVEVIVQPIMEDLNFELVDVEYVKEGRDHFLRISIDKEGGVDLNDCTLASEKISEAMDANDPIPEMYYLDVASPGAERPIKKEQDFQNAITKPVFVSLYVPIEGEKEWLGILQEVNNETIVVQVKIKARTKDIEIPRDKIAKARHAVMI</sequence>
<gene>
    <name evidence="1" type="primary">rimP</name>
    <name type="ordered locus">SAHV_1255</name>
</gene>
<organism>
    <name type="scientific">Staphylococcus aureus (strain Mu3 / ATCC 700698)</name>
    <dbReference type="NCBI Taxonomy" id="418127"/>
    <lineage>
        <taxon>Bacteria</taxon>
        <taxon>Bacillati</taxon>
        <taxon>Bacillota</taxon>
        <taxon>Bacilli</taxon>
        <taxon>Bacillales</taxon>
        <taxon>Staphylococcaceae</taxon>
        <taxon>Staphylococcus</taxon>
    </lineage>
</organism>
<feature type="chain" id="PRO_1000064777" description="Ribosome maturation factor RimP">
    <location>
        <begin position="1"/>
        <end position="155"/>
    </location>
</feature>
<accession>A7X1P6</accession>
<proteinExistence type="inferred from homology"/>